<organism>
    <name type="scientific">Saccharomyces cerevisiae (strain ATCC 204508 / S288c)</name>
    <name type="common">Baker's yeast</name>
    <dbReference type="NCBI Taxonomy" id="559292"/>
    <lineage>
        <taxon>Eukaryota</taxon>
        <taxon>Fungi</taxon>
        <taxon>Dikarya</taxon>
        <taxon>Ascomycota</taxon>
        <taxon>Saccharomycotina</taxon>
        <taxon>Saccharomycetes</taxon>
        <taxon>Saccharomycetales</taxon>
        <taxon>Saccharomycetaceae</taxon>
        <taxon>Saccharomyces</taxon>
    </lineage>
</organism>
<sequence>MQARRQTLPQFIKCKQTKCKIKLATINSAKALFLEMPGKLLHNCNRKLINRTNCPTQIMNPAKNALNGKLSRIKIMNVHWITPNNTKKKQNVSISFSLGYFSIWAKYALLEVLKVS</sequence>
<protein>
    <recommendedName>
        <fullName>Putative uncharacterized protein YOR102W</fullName>
    </recommendedName>
</protein>
<name>YO102_YEAST</name>
<feature type="chain" id="PRO_0000299711" description="Putative uncharacterized protein YOR102W">
    <location>
        <begin position="1"/>
        <end position="116"/>
    </location>
</feature>
<dbReference type="EMBL" id="Z75010">
    <property type="protein sequence ID" value="CAA99299.1"/>
    <property type="molecule type" value="Genomic_DNA"/>
</dbReference>
<dbReference type="PIR" id="S66987">
    <property type="entry name" value="S66987"/>
</dbReference>
<dbReference type="DIP" id="DIP-4460N"/>
<dbReference type="PaxDb" id="4932-YOR102W"/>
<dbReference type="EnsemblFungi" id="YOR102W_mRNA">
    <property type="protein sequence ID" value="YOR102W"/>
    <property type="gene ID" value="YOR102W"/>
</dbReference>
<dbReference type="AGR" id="SGD:S000005628"/>
<dbReference type="SGD" id="S000005628">
    <property type="gene designation" value="YOR102W"/>
</dbReference>
<dbReference type="HOGENOM" id="CLU_2098733_0_0_1"/>
<comment type="miscellaneous">
    <text evidence="1">Almost completely overlaps OST2.</text>
</comment>
<comment type="caution">
    <text evidence="2">Product of a dubious gene prediction unlikely to encode a functional protein. Because of that it is not part of the S.cerevisiae S288c complete/reference proteome set.</text>
</comment>
<evidence type="ECO:0000305" key="1"/>
<evidence type="ECO:0000305" key="2">
    <source>
    </source>
</evidence>
<proteinExistence type="uncertain"/>
<reference key="1">
    <citation type="journal article" date="1997" name="Nature">
        <title>The nucleotide sequence of Saccharomyces cerevisiae chromosome XV.</title>
        <authorList>
            <person name="Dujon B."/>
            <person name="Albermann K."/>
            <person name="Aldea M."/>
            <person name="Alexandraki D."/>
            <person name="Ansorge W."/>
            <person name="Arino J."/>
            <person name="Benes V."/>
            <person name="Bohn C."/>
            <person name="Bolotin-Fukuhara M."/>
            <person name="Bordonne R."/>
            <person name="Boyer J."/>
            <person name="Camasses A."/>
            <person name="Casamayor A."/>
            <person name="Casas C."/>
            <person name="Cheret G."/>
            <person name="Cziepluch C."/>
            <person name="Daignan-Fornier B."/>
            <person name="Dang V.-D."/>
            <person name="de Haan M."/>
            <person name="Delius H."/>
            <person name="Durand P."/>
            <person name="Fairhead C."/>
            <person name="Feldmann H."/>
            <person name="Gaillon L."/>
            <person name="Galisson F."/>
            <person name="Gamo F.-J."/>
            <person name="Gancedo C."/>
            <person name="Goffeau A."/>
            <person name="Goulding S.E."/>
            <person name="Grivell L.A."/>
            <person name="Habbig B."/>
            <person name="Hand N.J."/>
            <person name="Hani J."/>
            <person name="Hattenhorst U."/>
            <person name="Hebling U."/>
            <person name="Hernando Y."/>
            <person name="Herrero E."/>
            <person name="Heumann K."/>
            <person name="Hiesel R."/>
            <person name="Hilger F."/>
            <person name="Hofmann B."/>
            <person name="Hollenberg C.P."/>
            <person name="Hughes B."/>
            <person name="Jauniaux J.-C."/>
            <person name="Kalogeropoulos A."/>
            <person name="Katsoulou C."/>
            <person name="Kordes E."/>
            <person name="Lafuente M.J."/>
            <person name="Landt O."/>
            <person name="Louis E.J."/>
            <person name="Maarse A.C."/>
            <person name="Madania A."/>
            <person name="Mannhaupt G."/>
            <person name="Marck C."/>
            <person name="Martin R.P."/>
            <person name="Mewes H.-W."/>
            <person name="Michaux G."/>
            <person name="Paces V."/>
            <person name="Parle-McDermott A.G."/>
            <person name="Pearson B.M."/>
            <person name="Perrin A."/>
            <person name="Pettersson B."/>
            <person name="Poch O."/>
            <person name="Pohl T.M."/>
            <person name="Poirey R."/>
            <person name="Portetelle D."/>
            <person name="Pujol A."/>
            <person name="Purnelle B."/>
            <person name="Ramezani Rad M."/>
            <person name="Rechmann S."/>
            <person name="Schwager C."/>
            <person name="Schweizer M."/>
            <person name="Sor F."/>
            <person name="Sterky F."/>
            <person name="Tarassov I.A."/>
            <person name="Teodoru C."/>
            <person name="Tettelin H."/>
            <person name="Thierry A."/>
            <person name="Tobiasch E."/>
            <person name="Tzermia M."/>
            <person name="Uhlen M."/>
            <person name="Unseld M."/>
            <person name="Valens M."/>
            <person name="Vandenbol M."/>
            <person name="Vetter I."/>
            <person name="Vlcek C."/>
            <person name="Voet M."/>
            <person name="Volckaert G."/>
            <person name="Voss H."/>
            <person name="Wambutt R."/>
            <person name="Wedler H."/>
            <person name="Wiemann S."/>
            <person name="Winsor B."/>
            <person name="Wolfe K.H."/>
            <person name="Zollner A."/>
            <person name="Zumstein E."/>
            <person name="Kleine K."/>
        </authorList>
    </citation>
    <scope>NUCLEOTIDE SEQUENCE [LARGE SCALE GENOMIC DNA]</scope>
    <source>
        <strain>ATCC 204508 / S288c</strain>
    </source>
</reference>
<reference key="2">
    <citation type="journal article" date="2014" name="G3 (Bethesda)">
        <title>The reference genome sequence of Saccharomyces cerevisiae: Then and now.</title>
        <authorList>
            <person name="Engel S.R."/>
            <person name="Dietrich F.S."/>
            <person name="Fisk D.G."/>
            <person name="Binkley G."/>
            <person name="Balakrishnan R."/>
            <person name="Costanzo M.C."/>
            <person name="Dwight S.S."/>
            <person name="Hitz B.C."/>
            <person name="Karra K."/>
            <person name="Nash R.S."/>
            <person name="Weng S."/>
            <person name="Wong E.D."/>
            <person name="Lloyd P."/>
            <person name="Skrzypek M.S."/>
            <person name="Miyasato S.R."/>
            <person name="Simison M."/>
            <person name="Cherry J.M."/>
        </authorList>
    </citation>
    <scope>GENOME REANNOTATION</scope>
    <source>
        <strain>ATCC 204508 / S288c</strain>
    </source>
</reference>
<gene>
    <name type="ordered locus">YOR102W</name>
    <name type="ORF">O3208</name>
</gene>
<accession>Q08503</accession>